<feature type="chain" id="PRO_1000084567" description="tRNA pseudouridine synthase B">
    <location>
        <begin position="1"/>
        <end position="310"/>
    </location>
</feature>
<feature type="active site" description="Nucleophile" evidence="1">
    <location>
        <position position="47"/>
    </location>
</feature>
<comment type="function">
    <text evidence="1">Responsible for synthesis of pseudouridine from uracil-55 in the psi GC loop of transfer RNAs.</text>
</comment>
<comment type="catalytic activity">
    <reaction evidence="1">
        <text>uridine(55) in tRNA = pseudouridine(55) in tRNA</text>
        <dbReference type="Rhea" id="RHEA:42532"/>
        <dbReference type="Rhea" id="RHEA-COMP:10101"/>
        <dbReference type="Rhea" id="RHEA-COMP:10102"/>
        <dbReference type="ChEBI" id="CHEBI:65314"/>
        <dbReference type="ChEBI" id="CHEBI:65315"/>
        <dbReference type="EC" id="5.4.99.25"/>
    </reaction>
</comment>
<comment type="similarity">
    <text evidence="1">Belongs to the pseudouridine synthase TruB family. Type 1 subfamily.</text>
</comment>
<gene>
    <name evidence="1" type="primary">truB</name>
    <name type="ordered locus">Caul_0039</name>
</gene>
<name>TRUB_CAUSK</name>
<keyword id="KW-0413">Isomerase</keyword>
<keyword id="KW-0819">tRNA processing</keyword>
<evidence type="ECO:0000255" key="1">
    <source>
        <dbReference type="HAMAP-Rule" id="MF_01080"/>
    </source>
</evidence>
<reference key="1">
    <citation type="submission" date="2008-01" db="EMBL/GenBank/DDBJ databases">
        <title>Complete sequence of chromosome of Caulobacter sp. K31.</title>
        <authorList>
            <consortium name="US DOE Joint Genome Institute"/>
            <person name="Copeland A."/>
            <person name="Lucas S."/>
            <person name="Lapidus A."/>
            <person name="Barry K."/>
            <person name="Glavina del Rio T."/>
            <person name="Dalin E."/>
            <person name="Tice H."/>
            <person name="Pitluck S."/>
            <person name="Bruce D."/>
            <person name="Goodwin L."/>
            <person name="Thompson L.S."/>
            <person name="Brettin T."/>
            <person name="Detter J.C."/>
            <person name="Han C."/>
            <person name="Schmutz J."/>
            <person name="Larimer F."/>
            <person name="Land M."/>
            <person name="Hauser L."/>
            <person name="Kyrpides N."/>
            <person name="Kim E."/>
            <person name="Stephens C."/>
            <person name="Richardson P."/>
        </authorList>
    </citation>
    <scope>NUCLEOTIDE SEQUENCE [LARGE SCALE GENOMIC DNA]</scope>
    <source>
        <strain>K31</strain>
    </source>
</reference>
<organism>
    <name type="scientific">Caulobacter sp. (strain K31)</name>
    <dbReference type="NCBI Taxonomy" id="366602"/>
    <lineage>
        <taxon>Bacteria</taxon>
        <taxon>Pseudomonadati</taxon>
        <taxon>Pseudomonadota</taxon>
        <taxon>Alphaproteobacteria</taxon>
        <taxon>Caulobacterales</taxon>
        <taxon>Caulobacteraceae</taxon>
        <taxon>Caulobacter</taxon>
    </lineage>
</organism>
<proteinExistence type="inferred from homology"/>
<dbReference type="EC" id="5.4.99.25" evidence="1"/>
<dbReference type="EMBL" id="CP000927">
    <property type="protein sequence ID" value="ABZ69177.1"/>
    <property type="molecule type" value="Genomic_DNA"/>
</dbReference>
<dbReference type="SMR" id="B0T173"/>
<dbReference type="STRING" id="366602.Caul_0039"/>
<dbReference type="KEGG" id="cak:Caul_0039"/>
<dbReference type="eggNOG" id="COG0130">
    <property type="taxonomic scope" value="Bacteria"/>
</dbReference>
<dbReference type="HOGENOM" id="CLU_032087_0_3_5"/>
<dbReference type="OrthoDB" id="9802309at2"/>
<dbReference type="GO" id="GO:0003723">
    <property type="term" value="F:RNA binding"/>
    <property type="evidence" value="ECO:0007669"/>
    <property type="project" value="InterPro"/>
</dbReference>
<dbReference type="GO" id="GO:0160148">
    <property type="term" value="F:tRNA pseudouridine(55) synthase activity"/>
    <property type="evidence" value="ECO:0007669"/>
    <property type="project" value="UniProtKB-EC"/>
</dbReference>
<dbReference type="GO" id="GO:1990481">
    <property type="term" value="P:mRNA pseudouridine synthesis"/>
    <property type="evidence" value="ECO:0007669"/>
    <property type="project" value="TreeGrafter"/>
</dbReference>
<dbReference type="GO" id="GO:0031119">
    <property type="term" value="P:tRNA pseudouridine synthesis"/>
    <property type="evidence" value="ECO:0007669"/>
    <property type="project" value="UniProtKB-UniRule"/>
</dbReference>
<dbReference type="CDD" id="cd02573">
    <property type="entry name" value="PseudoU_synth_EcTruB"/>
    <property type="match status" value="1"/>
</dbReference>
<dbReference type="Gene3D" id="3.30.2350.10">
    <property type="entry name" value="Pseudouridine synthase"/>
    <property type="match status" value="1"/>
</dbReference>
<dbReference type="HAMAP" id="MF_01080">
    <property type="entry name" value="TruB_bact"/>
    <property type="match status" value="1"/>
</dbReference>
<dbReference type="InterPro" id="IPR020103">
    <property type="entry name" value="PsdUridine_synth_cat_dom_sf"/>
</dbReference>
<dbReference type="InterPro" id="IPR002501">
    <property type="entry name" value="PsdUridine_synth_N"/>
</dbReference>
<dbReference type="InterPro" id="IPR014780">
    <property type="entry name" value="tRNA_psdUridine_synth_TruB"/>
</dbReference>
<dbReference type="InterPro" id="IPR032819">
    <property type="entry name" value="TruB_C"/>
</dbReference>
<dbReference type="NCBIfam" id="TIGR00431">
    <property type="entry name" value="TruB"/>
    <property type="match status" value="1"/>
</dbReference>
<dbReference type="PANTHER" id="PTHR13767:SF2">
    <property type="entry name" value="PSEUDOURIDYLATE SYNTHASE TRUB1"/>
    <property type="match status" value="1"/>
</dbReference>
<dbReference type="PANTHER" id="PTHR13767">
    <property type="entry name" value="TRNA-PSEUDOURIDINE SYNTHASE"/>
    <property type="match status" value="1"/>
</dbReference>
<dbReference type="Pfam" id="PF16198">
    <property type="entry name" value="TruB_C_2"/>
    <property type="match status" value="1"/>
</dbReference>
<dbReference type="Pfam" id="PF01509">
    <property type="entry name" value="TruB_N"/>
    <property type="match status" value="1"/>
</dbReference>
<dbReference type="SUPFAM" id="SSF55120">
    <property type="entry name" value="Pseudouridine synthase"/>
    <property type="match status" value="1"/>
</dbReference>
<accession>B0T173</accession>
<sequence>MARRKKGDAISGWICLDKPYDLTSTSAVSRVRRAFNAQKAGHAGTLDPLATGVLPLALGEATKTVPFLMDADKAYRFTIAWGRSTTTLDREGETTDSSDVRPTREQVEAVLAPFIGEIDQIPPNYSAIKVDGERAYDLAREGVEFELKTRKVKVHALRVTAAPDVDHLELEMECGKGTYVRAIVRDLAAALGACGHVDQLRRTRVGRFTEQTAIGLETLENLSYEARLSEALLPVETALDDIPALAVTDEDAFRLAQGRAIVLLPRQVESLKAVLTPGDRTVSAMSGQRLVALCEMRAGSLNPVRVFQLT</sequence>
<protein>
    <recommendedName>
        <fullName evidence="1">tRNA pseudouridine synthase B</fullName>
        <ecNumber evidence="1">5.4.99.25</ecNumber>
    </recommendedName>
    <alternativeName>
        <fullName evidence="1">tRNA pseudouridine(55) synthase</fullName>
        <shortName evidence="1">Psi55 synthase</shortName>
    </alternativeName>
    <alternativeName>
        <fullName evidence="1">tRNA pseudouridylate synthase</fullName>
    </alternativeName>
    <alternativeName>
        <fullName evidence="1">tRNA-uridine isomerase</fullName>
    </alternativeName>
</protein>